<proteinExistence type="evidence at transcript level"/>
<evidence type="ECO:0000250" key="1"/>
<evidence type="ECO:0000255" key="2"/>
<comment type="function">
    <text evidence="1">May act as a nuclear transcription factor that negatively regulates the expression of cardiac genes.</text>
</comment>
<comment type="subcellular location">
    <subcellularLocation>
        <location evidence="1">Nucleus</location>
    </subcellularLocation>
</comment>
<reference key="1">
    <citation type="submission" date="2005-07" db="EMBL/GenBank/DDBJ databases">
        <authorList>
            <consortium name="NIH - Xenopus Gene Collection (XGC) project"/>
        </authorList>
    </citation>
    <scope>NUCLEOTIDE SEQUENCE [LARGE SCALE MRNA]</scope>
</reference>
<name>ANKR1_XENLA</name>
<sequence length="318" mass="36073">MLLKMEEMVIEKKNEMKQTGDFVSGVSKNGEYETAVALEKQEDLKTTSKSLIELEEEKQSKEKQLKSELLKKKLEERPKLDNLEDLQTIINLKKRKRVKKVKVPVVKEPEPEETIGDVDQMTFFKAALDNKMSIIEKYLADGGDPNTCDEYKRTALHRACSEGHTAIVEKLIEAGANIEFKDMLESTALHWTCRGGSVETLKLLLNKGAAINARDKLLSTPLHVAVRTGYYECGEHLIACEADLNAKDREGDTPMHDGVRLNRYKMIRLLILYGVNLNIKNCAGKTPMELVMQWQNGAKEIFNGLQNKSYKNSHISKF</sequence>
<feature type="chain" id="PRO_0000240485" description="Ankyrin repeat domain-containing protein 1">
    <location>
        <begin position="1"/>
        <end position="318"/>
    </location>
</feature>
<feature type="repeat" description="ANK 1">
    <location>
        <begin position="151"/>
        <end position="180"/>
    </location>
</feature>
<feature type="repeat" description="ANK 2">
    <location>
        <begin position="184"/>
        <end position="213"/>
    </location>
</feature>
<feature type="repeat" description="ANK 3">
    <location>
        <begin position="217"/>
        <end position="246"/>
    </location>
</feature>
<feature type="repeat" description="ANK 4">
    <location>
        <begin position="250"/>
        <end position="279"/>
    </location>
</feature>
<feature type="repeat" description="ANK 5">
    <location>
        <begin position="283"/>
        <end position="314"/>
    </location>
</feature>
<feature type="coiled-coil region" evidence="2">
    <location>
        <begin position="37"/>
        <end position="77"/>
    </location>
</feature>
<organism>
    <name type="scientific">Xenopus laevis</name>
    <name type="common">African clawed frog</name>
    <dbReference type="NCBI Taxonomy" id="8355"/>
    <lineage>
        <taxon>Eukaryota</taxon>
        <taxon>Metazoa</taxon>
        <taxon>Chordata</taxon>
        <taxon>Craniata</taxon>
        <taxon>Vertebrata</taxon>
        <taxon>Euteleostomi</taxon>
        <taxon>Amphibia</taxon>
        <taxon>Batrachia</taxon>
        <taxon>Anura</taxon>
        <taxon>Pipoidea</taxon>
        <taxon>Pipidae</taxon>
        <taxon>Xenopodinae</taxon>
        <taxon>Xenopus</taxon>
        <taxon>Xenopus</taxon>
    </lineage>
</organism>
<gene>
    <name type="primary">ankrd1</name>
</gene>
<keyword id="KW-0040">ANK repeat</keyword>
<keyword id="KW-0175">Coiled coil</keyword>
<keyword id="KW-0539">Nucleus</keyword>
<keyword id="KW-1185">Reference proteome</keyword>
<keyword id="KW-0677">Repeat</keyword>
<dbReference type="EMBL" id="BC099339">
    <property type="protein sequence ID" value="AAH99339.1"/>
    <property type="molecule type" value="mRNA"/>
</dbReference>
<dbReference type="RefSeq" id="NP_001089636.1">
    <property type="nucleotide sequence ID" value="NM_001096167.1"/>
</dbReference>
<dbReference type="SMR" id="Q4KL97"/>
<dbReference type="DNASU" id="734696"/>
<dbReference type="GeneID" id="734696"/>
<dbReference type="KEGG" id="xla:734696"/>
<dbReference type="AGR" id="Xenbase:XB-GENE-974657"/>
<dbReference type="CTD" id="734696"/>
<dbReference type="Xenbase" id="XB-GENE-974657">
    <property type="gene designation" value="ankrd1.L"/>
</dbReference>
<dbReference type="OrthoDB" id="426293at2759"/>
<dbReference type="Proteomes" id="UP000186698">
    <property type="component" value="Chromosome 7L"/>
</dbReference>
<dbReference type="Bgee" id="734696">
    <property type="expression patterns" value="Expressed in muscle tissue and 5 other cell types or tissues"/>
</dbReference>
<dbReference type="GO" id="GO:0005737">
    <property type="term" value="C:cytoplasm"/>
    <property type="evidence" value="ECO:0007669"/>
    <property type="project" value="UniProtKB-ARBA"/>
</dbReference>
<dbReference type="GO" id="GO:0005634">
    <property type="term" value="C:nucleus"/>
    <property type="evidence" value="ECO:0000318"/>
    <property type="project" value="GO_Central"/>
</dbReference>
<dbReference type="GO" id="GO:0061629">
    <property type="term" value="F:RNA polymerase II-specific DNA-binding transcription factor binding"/>
    <property type="evidence" value="ECO:0000318"/>
    <property type="project" value="GO_Central"/>
</dbReference>
<dbReference type="GO" id="GO:0006357">
    <property type="term" value="P:regulation of transcription by RNA polymerase II"/>
    <property type="evidence" value="ECO:0000318"/>
    <property type="project" value="GO_Central"/>
</dbReference>
<dbReference type="FunFam" id="1.25.40.20:FF:000111">
    <property type="entry name" value="Ankyrin repeat domain-containing protein 1"/>
    <property type="match status" value="1"/>
</dbReference>
<dbReference type="FunFam" id="1.25.40.20:FF:000183">
    <property type="entry name" value="ankyrin repeat domain-containing protein 1"/>
    <property type="match status" value="1"/>
</dbReference>
<dbReference type="Gene3D" id="1.25.40.20">
    <property type="entry name" value="Ankyrin repeat-containing domain"/>
    <property type="match status" value="2"/>
</dbReference>
<dbReference type="InterPro" id="IPR002110">
    <property type="entry name" value="Ankyrin_rpt"/>
</dbReference>
<dbReference type="InterPro" id="IPR036770">
    <property type="entry name" value="Ankyrin_rpt-contain_sf"/>
</dbReference>
<dbReference type="PANTHER" id="PTHR24126:SF7">
    <property type="entry name" value="ANKYRIN REPEAT DOMAIN-CONTAINING PROTEIN 1"/>
    <property type="match status" value="1"/>
</dbReference>
<dbReference type="PANTHER" id="PTHR24126">
    <property type="entry name" value="ANKYRIN REPEAT, PH AND SEC7 DOMAIN CONTAINING PROTEIN SECG-RELATED"/>
    <property type="match status" value="1"/>
</dbReference>
<dbReference type="Pfam" id="PF12796">
    <property type="entry name" value="Ank_2"/>
    <property type="match status" value="2"/>
</dbReference>
<dbReference type="SMART" id="SM00248">
    <property type="entry name" value="ANK"/>
    <property type="match status" value="4"/>
</dbReference>
<dbReference type="SUPFAM" id="SSF48403">
    <property type="entry name" value="Ankyrin repeat"/>
    <property type="match status" value="1"/>
</dbReference>
<dbReference type="PROSITE" id="PS50297">
    <property type="entry name" value="ANK_REP_REGION"/>
    <property type="match status" value="1"/>
</dbReference>
<dbReference type="PROSITE" id="PS50088">
    <property type="entry name" value="ANK_REPEAT"/>
    <property type="match status" value="4"/>
</dbReference>
<protein>
    <recommendedName>
        <fullName>Ankyrin repeat domain-containing protein 1</fullName>
    </recommendedName>
</protein>
<accession>Q4KL97</accession>